<sequence>MPSFDVVSELDKHEVTNAVDNAIKELDRRYDLKGKGTFEFKELTVTLTAEADFQLEAMIEILKLALVKRKIDAKCLEIKDAYASGKLMKQEVILREGIDKELAKKIVAHIKEAKLKVQAAIQGEQVRVTGKKRDDLQEAIAALRAYDSGMPLQFNNFRD</sequence>
<gene>
    <name type="ordered locus">Psyr_4087</name>
</gene>
<keyword id="KW-0547">Nucleotide-binding</keyword>
<comment type="function">
    <text evidence="1">Nucleotide-binding protein.</text>
</comment>
<comment type="similarity">
    <text evidence="1">Belongs to the YajQ family.</text>
</comment>
<evidence type="ECO:0000255" key="1">
    <source>
        <dbReference type="HAMAP-Rule" id="MF_00632"/>
    </source>
</evidence>
<reference key="1">
    <citation type="journal article" date="2005" name="Proc. Natl. Acad. Sci. U.S.A.">
        <title>Comparison of the complete genome sequences of Pseudomonas syringae pv. syringae B728a and pv. tomato DC3000.</title>
        <authorList>
            <person name="Feil H."/>
            <person name="Feil W.S."/>
            <person name="Chain P."/>
            <person name="Larimer F."/>
            <person name="Dibartolo G."/>
            <person name="Copeland A."/>
            <person name="Lykidis A."/>
            <person name="Trong S."/>
            <person name="Nolan M."/>
            <person name="Goltsman E."/>
            <person name="Thiel J."/>
            <person name="Malfatti S."/>
            <person name="Loper J.E."/>
            <person name="Lapidus A."/>
            <person name="Detter J.C."/>
            <person name="Land M."/>
            <person name="Richardson P.M."/>
            <person name="Kyrpides N.C."/>
            <person name="Ivanova N."/>
            <person name="Lindow S.E."/>
        </authorList>
    </citation>
    <scope>NUCLEOTIDE SEQUENCE [LARGE SCALE GENOMIC DNA]</scope>
    <source>
        <strain>B728a</strain>
    </source>
</reference>
<protein>
    <recommendedName>
        <fullName evidence="1">Nucleotide-binding protein Psyr_4087</fullName>
    </recommendedName>
</protein>
<feature type="chain" id="PRO_0000261964" description="Nucleotide-binding protein Psyr_4087">
    <location>
        <begin position="1"/>
        <end position="159"/>
    </location>
</feature>
<accession>Q4ZP05</accession>
<organism>
    <name type="scientific">Pseudomonas syringae pv. syringae (strain B728a)</name>
    <dbReference type="NCBI Taxonomy" id="205918"/>
    <lineage>
        <taxon>Bacteria</taxon>
        <taxon>Pseudomonadati</taxon>
        <taxon>Pseudomonadota</taxon>
        <taxon>Gammaproteobacteria</taxon>
        <taxon>Pseudomonadales</taxon>
        <taxon>Pseudomonadaceae</taxon>
        <taxon>Pseudomonas</taxon>
        <taxon>Pseudomonas syringae</taxon>
    </lineage>
</organism>
<dbReference type="EMBL" id="CP000075">
    <property type="protein sequence ID" value="AAY39117.1"/>
    <property type="molecule type" value="Genomic_DNA"/>
</dbReference>
<dbReference type="RefSeq" id="WP_003304827.1">
    <property type="nucleotide sequence ID" value="NC_007005.1"/>
</dbReference>
<dbReference type="RefSeq" id="YP_237155.1">
    <property type="nucleotide sequence ID" value="NC_007005.1"/>
</dbReference>
<dbReference type="SMR" id="Q4ZP05"/>
<dbReference type="STRING" id="205918.Psyr_4087"/>
<dbReference type="KEGG" id="psb:Psyr_4087"/>
<dbReference type="PATRIC" id="fig|205918.7.peg.4205"/>
<dbReference type="eggNOG" id="COG1666">
    <property type="taxonomic scope" value="Bacteria"/>
</dbReference>
<dbReference type="HOGENOM" id="CLU_099839_1_0_6"/>
<dbReference type="OrthoDB" id="9801447at2"/>
<dbReference type="Proteomes" id="UP000000426">
    <property type="component" value="Chromosome"/>
</dbReference>
<dbReference type="GO" id="GO:0005829">
    <property type="term" value="C:cytosol"/>
    <property type="evidence" value="ECO:0007669"/>
    <property type="project" value="TreeGrafter"/>
</dbReference>
<dbReference type="GO" id="GO:0000166">
    <property type="term" value="F:nucleotide binding"/>
    <property type="evidence" value="ECO:0007669"/>
    <property type="project" value="TreeGrafter"/>
</dbReference>
<dbReference type="CDD" id="cd11740">
    <property type="entry name" value="YajQ_like"/>
    <property type="match status" value="1"/>
</dbReference>
<dbReference type="Gene3D" id="3.30.70.860">
    <property type="match status" value="1"/>
</dbReference>
<dbReference type="Gene3D" id="3.30.70.990">
    <property type="entry name" value="YajQ-like, domain 2"/>
    <property type="match status" value="1"/>
</dbReference>
<dbReference type="HAMAP" id="MF_00632">
    <property type="entry name" value="YajQ"/>
    <property type="match status" value="1"/>
</dbReference>
<dbReference type="InterPro" id="IPR007551">
    <property type="entry name" value="DUF520"/>
</dbReference>
<dbReference type="InterPro" id="IPR035571">
    <property type="entry name" value="UPF0234-like_C"/>
</dbReference>
<dbReference type="InterPro" id="IPR035570">
    <property type="entry name" value="UPF0234_N"/>
</dbReference>
<dbReference type="InterPro" id="IPR036183">
    <property type="entry name" value="YajQ-like_sf"/>
</dbReference>
<dbReference type="NCBIfam" id="NF003819">
    <property type="entry name" value="PRK05412.1"/>
    <property type="match status" value="1"/>
</dbReference>
<dbReference type="PANTHER" id="PTHR30476">
    <property type="entry name" value="UPF0234 PROTEIN YAJQ"/>
    <property type="match status" value="1"/>
</dbReference>
<dbReference type="PANTHER" id="PTHR30476:SF0">
    <property type="entry name" value="UPF0234 PROTEIN YAJQ"/>
    <property type="match status" value="1"/>
</dbReference>
<dbReference type="Pfam" id="PF04461">
    <property type="entry name" value="DUF520"/>
    <property type="match status" value="1"/>
</dbReference>
<dbReference type="SUPFAM" id="SSF89963">
    <property type="entry name" value="YajQ-like"/>
    <property type="match status" value="2"/>
</dbReference>
<proteinExistence type="inferred from homology"/>
<name>Y4087_PSEU2</name>